<comment type="function">
    <text evidence="1 2 7">Lactamase-like protein; part of the gene cluster that mediates the biosynthesis of neosartoricin B, a prenylated anthracenone that probably exhibits T-cell antiproliferative activity, suggestive of a physiological role as an immunosuppressive agent (PubMed:23758576). The non-reducing polyketide synthase nscA probably synthesizes and cyclizes the decaketide backbone (By similarity). The hydrolase nscB then mediates the product release through hydrolysis followed by spontaneous decarboxylation (By similarity). The prenyltransferase nscD catalyzes the addition of the dimethylallyl group to the aromatic C5 (By similarity). The FAD-dependent monooxygenase nscC is then responsible for the stereospecific hydroxylation at C2 (By similarity). Neosartoricin B can be converted into two additional compounds neosartoricins C and D (By similarity). Neosartoricin C is a spirocyclic compound that is cyclized through the attack of C3 hydroxyl on C14, followed by dehydration (By similarity). On the other hand, neosartoricin D is a further cyclized compound in which attack of C2 on C14 in neosartoricin C results in the formation of the acetal-containing dioxabicyclo-octanone ring (By similarity). Both of these compounds are novel and possibly represent related metabolites of the gene cluster (By similarity).</text>
</comment>
<comment type="cofactor">
    <cofactor evidence="3">
        <name>Zn(2+)</name>
        <dbReference type="ChEBI" id="CHEBI:29105"/>
    </cofactor>
    <text evidence="3">Binds 2 Zn(2+) ions per subunit.</text>
</comment>
<comment type="pathway">
    <text evidence="7">Secondary metabolite biosynthesis.</text>
</comment>
<comment type="similarity">
    <text evidence="6">Belongs to the metallo-beta-lactamase superfamily.</text>
</comment>
<accession>E4V2N5</accession>
<proteinExistence type="inferred from homology"/>
<name>NSCB_ARTGP</name>
<keyword id="KW-0378">Hydrolase</keyword>
<keyword id="KW-0479">Metal-binding</keyword>
<keyword id="KW-1185">Reference proteome</keyword>
<keyword id="KW-0862">Zinc</keyword>
<sequence length="313" mass="34660">MGGRLPFNQSFWEEFLMGREGSLPNLPEISHVSKRVVRILGGNPGSMHLQGTNTYLVGTGRSRILIDTAQGLPAWIHRISSFLFTHNIELSYVLLTHWHGDHTGGVPDLIAHNPLLTNKIYKNNPDAGQNTITDGQIFSVNGATVRAVFTPGHSVDHMCFVLEEENALFTGDNVLGHGFSVAQDLGCYMDSLRNMSALACGLGYPAHGAIIENLPGKLDEYIQHREGRERMMLSTLTKELVQGQERRGEGTKGGLTLNEIVISIYGRLPQEVIEKALAPSLLQVLWKLTEDRRVGFKPGDPLKRQWFALISVE</sequence>
<feature type="chain" id="PRO_0000437903" description="Lactamase-like protein nscB">
    <location>
        <begin position="1"/>
        <end position="313"/>
    </location>
</feature>
<feature type="active site" description="Proton donor/acceptor" evidence="4">
    <location>
        <position position="101"/>
    </location>
</feature>
<feature type="binding site" evidence="3">
    <location>
        <position position="97"/>
    </location>
    <ligand>
        <name>Zn(2+)</name>
        <dbReference type="ChEBI" id="CHEBI:29105"/>
        <label>1</label>
        <note>catalytic</note>
    </ligand>
</feature>
<feature type="binding site" evidence="3">
    <location>
        <position position="99"/>
    </location>
    <ligand>
        <name>Zn(2+)</name>
        <dbReference type="ChEBI" id="CHEBI:29105"/>
        <label>1</label>
        <note>catalytic</note>
    </ligand>
</feature>
<feature type="binding site" evidence="3">
    <location>
        <position position="101"/>
    </location>
    <ligand>
        <name>Zn(2+)</name>
        <dbReference type="ChEBI" id="CHEBI:29105"/>
        <label>2</label>
        <note>catalytic</note>
    </ligand>
</feature>
<feature type="binding site" evidence="3">
    <location>
        <position position="102"/>
    </location>
    <ligand>
        <name>Zn(2+)</name>
        <dbReference type="ChEBI" id="CHEBI:29105"/>
        <label>2</label>
        <note>catalytic</note>
    </ligand>
</feature>
<protein>
    <recommendedName>
        <fullName evidence="5">Lactamase-like protein nscB</fullName>
        <ecNumber evidence="7">3.1.-.-</ecNumber>
    </recommendedName>
    <alternativeName>
        <fullName evidence="5">Neosartoricin B biosynthesis protein B</fullName>
    </alternativeName>
</protein>
<gene>
    <name evidence="5" type="primary">nscB</name>
    <name type="ORF">MGYG_06591</name>
</gene>
<evidence type="ECO:0000250" key="1">
    <source>
        <dbReference type="UniProtKB" id="A1D8I9"/>
    </source>
</evidence>
<evidence type="ECO:0000250" key="2">
    <source>
        <dbReference type="UniProtKB" id="F2S702"/>
    </source>
</evidence>
<evidence type="ECO:0000250" key="3">
    <source>
        <dbReference type="UniProtKB" id="Q988B9"/>
    </source>
</evidence>
<evidence type="ECO:0000255" key="4"/>
<evidence type="ECO:0000303" key="5">
    <source>
    </source>
</evidence>
<evidence type="ECO:0000305" key="6"/>
<evidence type="ECO:0000305" key="7">
    <source>
    </source>
</evidence>
<organism>
    <name type="scientific">Arthroderma gypseum (strain ATCC MYA-4604 / CBS 118893)</name>
    <name type="common">Microsporum gypseum</name>
    <dbReference type="NCBI Taxonomy" id="535722"/>
    <lineage>
        <taxon>Eukaryota</taxon>
        <taxon>Fungi</taxon>
        <taxon>Dikarya</taxon>
        <taxon>Ascomycota</taxon>
        <taxon>Pezizomycotina</taxon>
        <taxon>Eurotiomycetes</taxon>
        <taxon>Eurotiomycetidae</taxon>
        <taxon>Onygenales</taxon>
        <taxon>Arthrodermataceae</taxon>
        <taxon>Nannizzia</taxon>
    </lineage>
</organism>
<dbReference type="EC" id="3.1.-.-" evidence="7"/>
<dbReference type="EMBL" id="DS989827">
    <property type="protein sequence ID" value="EFR03597.1"/>
    <property type="molecule type" value="Genomic_DNA"/>
</dbReference>
<dbReference type="RefSeq" id="XP_003170605.1">
    <property type="nucleotide sequence ID" value="XM_003170557.1"/>
</dbReference>
<dbReference type="SMR" id="E4V2N5"/>
<dbReference type="STRING" id="535722.E4V2N5"/>
<dbReference type="GeneID" id="10025844"/>
<dbReference type="VEuPathDB" id="FungiDB:MGYG_06591"/>
<dbReference type="eggNOG" id="KOG0813">
    <property type="taxonomic scope" value="Eukaryota"/>
</dbReference>
<dbReference type="HOGENOM" id="CLU_048478_1_0_1"/>
<dbReference type="InParanoid" id="E4V2N5"/>
<dbReference type="OMA" id="VDHMCFV"/>
<dbReference type="OrthoDB" id="17458at2759"/>
<dbReference type="Proteomes" id="UP000002669">
    <property type="component" value="Unassembled WGS sequence"/>
</dbReference>
<dbReference type="GO" id="GO:0016787">
    <property type="term" value="F:hydrolase activity"/>
    <property type="evidence" value="ECO:0007669"/>
    <property type="project" value="UniProtKB-KW"/>
</dbReference>
<dbReference type="GO" id="GO:0046872">
    <property type="term" value="F:metal ion binding"/>
    <property type="evidence" value="ECO:0007669"/>
    <property type="project" value="UniProtKB-KW"/>
</dbReference>
<dbReference type="GO" id="GO:0044550">
    <property type="term" value="P:secondary metabolite biosynthetic process"/>
    <property type="evidence" value="ECO:0007669"/>
    <property type="project" value="UniProtKB-ARBA"/>
</dbReference>
<dbReference type="CDD" id="cd07722">
    <property type="entry name" value="LACTB2-like_MBL-fold"/>
    <property type="match status" value="1"/>
</dbReference>
<dbReference type="FunFam" id="3.60.15.10:FF:000041">
    <property type="entry name" value="Metallo-beta-lactamase domain protein"/>
    <property type="match status" value="1"/>
</dbReference>
<dbReference type="Gene3D" id="3.60.15.10">
    <property type="entry name" value="Ribonuclease Z/Hydroxyacylglutathione hydrolase-like"/>
    <property type="match status" value="1"/>
</dbReference>
<dbReference type="Gene3D" id="1.10.10.10">
    <property type="entry name" value="Winged helix-like DNA-binding domain superfamily/Winged helix DNA-binding domain"/>
    <property type="match status" value="1"/>
</dbReference>
<dbReference type="InterPro" id="IPR047921">
    <property type="entry name" value="LACTB2-like_MBL-fold"/>
</dbReference>
<dbReference type="InterPro" id="IPR001279">
    <property type="entry name" value="Metallo-B-lactamas"/>
</dbReference>
<dbReference type="InterPro" id="IPR036866">
    <property type="entry name" value="RibonucZ/Hydroxyglut_hydro"/>
</dbReference>
<dbReference type="InterPro" id="IPR050662">
    <property type="entry name" value="Sec-metab_biosynth-thioest"/>
</dbReference>
<dbReference type="InterPro" id="IPR036388">
    <property type="entry name" value="WH-like_DNA-bd_sf"/>
</dbReference>
<dbReference type="PANTHER" id="PTHR23131">
    <property type="entry name" value="ENDORIBONUCLEASE LACTB2"/>
    <property type="match status" value="1"/>
</dbReference>
<dbReference type="PANTHER" id="PTHR23131:SF2">
    <property type="entry name" value="LACTAMASE-LIKE PROTEIN APTB-RELATED"/>
    <property type="match status" value="1"/>
</dbReference>
<dbReference type="Pfam" id="PF00753">
    <property type="entry name" value="Lactamase_B"/>
    <property type="match status" value="1"/>
</dbReference>
<dbReference type="SMART" id="SM00849">
    <property type="entry name" value="Lactamase_B"/>
    <property type="match status" value="1"/>
</dbReference>
<dbReference type="SUPFAM" id="SSF56281">
    <property type="entry name" value="Metallo-hydrolase/oxidoreductase"/>
    <property type="match status" value="1"/>
</dbReference>
<reference key="1">
    <citation type="journal article" date="2012" name="MBio">
        <title>Comparative genome analysis of Trichophyton rubrum and related dermatophytes reveals candidate genes involved in infection.</title>
        <authorList>
            <person name="Martinez D.A."/>
            <person name="Oliver B.G."/>
            <person name="Graeser Y."/>
            <person name="Goldberg J.M."/>
            <person name="Li W."/>
            <person name="Martinez-Rossi N.M."/>
            <person name="Monod M."/>
            <person name="Shelest E."/>
            <person name="Barton R.C."/>
            <person name="Birch E."/>
            <person name="Brakhage A.A."/>
            <person name="Chen Z."/>
            <person name="Gurr S.J."/>
            <person name="Heiman D."/>
            <person name="Heitman J."/>
            <person name="Kosti I."/>
            <person name="Rossi A."/>
            <person name="Saif S."/>
            <person name="Samalova M."/>
            <person name="Saunders C.W."/>
            <person name="Shea T."/>
            <person name="Summerbell R.C."/>
            <person name="Xu J."/>
            <person name="Young S."/>
            <person name="Zeng Q."/>
            <person name="Birren B.W."/>
            <person name="Cuomo C.A."/>
            <person name="White T.C."/>
        </authorList>
    </citation>
    <scope>NUCLEOTIDE SEQUENCE [LARGE SCALE GENOMIC DNA]</scope>
    <source>
        <strain>ATCC MYA-4604 / CBS 118893</strain>
    </source>
</reference>
<reference key="2">
    <citation type="journal article" date="2013" name="ACS Synth. Biol.">
        <title>Discovery of cryptic polyketide metabolites from dermatophytes using heterologous expression in Aspergillus nidulans.</title>
        <authorList>
            <person name="Yin W.B."/>
            <person name="Chooi Y.H."/>
            <person name="Smith A.R."/>
            <person name="Cacho R.A."/>
            <person name="Hu Y."/>
            <person name="White T.C."/>
            <person name="Tang Y."/>
        </authorList>
    </citation>
    <scope>FUNCTION</scope>
</reference>